<reference key="1">
    <citation type="journal article" date="1990" name="Gene">
        <title>Structural analysis of the rabbit TNF locus, containing the genes encoding TNF-beta (lymphotoxin) and TNF-alpha (tumor necrosis factor).</title>
        <authorList>
            <person name="Shakhov A.N."/>
            <person name="Kuprash D.V."/>
            <person name="Azizov M.M."/>
            <person name="Jongeneel C.V."/>
            <person name="Nedospasov S.A."/>
        </authorList>
    </citation>
    <scope>NUCLEOTIDE SEQUENCE [GENOMIC DNA]</scope>
</reference>
<reference key="2">
    <citation type="journal article" date="1986" name="DNA">
        <title>Molecular cloning of the gene encoding rabbit tumor necrosis factor.</title>
        <authorList>
            <person name="Ito H."/>
            <person name="Shirai T."/>
            <person name="Yamamoto S."/>
            <person name="Akira M."/>
            <person name="Kawahara S."/>
            <person name="Todd C.W."/>
            <person name="Wallace R.B."/>
        </authorList>
    </citation>
    <scope>NUCLEOTIDE SEQUENCE [GENOMIC DNA]</scope>
</reference>
<reference key="3">
    <citation type="journal article" date="1986" name="DNA">
        <title>Molecular cloning and expression in Escherichia coli of the cDNA coding for rabbit tumor necrosis factor.</title>
        <authorList>
            <person name="Ito H."/>
            <person name="Yamamoto S."/>
            <person name="Kuroda S."/>
            <person name="Sakamoto H."/>
            <person name="Kajihara J."/>
            <person name="Kiyota T."/>
            <person name="Hayashi H."/>
            <person name="Kato M."/>
            <person name="Seko M."/>
        </authorList>
    </citation>
    <scope>NUCLEOTIDE SEQUENCE [MRNA]</scope>
</reference>
<accession>P04924</accession>
<comment type="function">
    <text evidence="2 3">Cytokine that binds to TNFRSF1A/TNFR1 and TNFRSF1B/TNFBR. It is mainly secreted by macrophages and can induce cell death of certain tumor cell lines. It is potent pyrogen causing fever by direct action or by stimulation of interleukin-1 secretion and is implicated in the induction of cachexia, Under certain conditions it can stimulate cell proliferation and induce cell differentiation (By similarity). Induces insulin resistance in adipocytes via inhibition of insulin-induced IRS1 tyrosine phosphorylation and insulin-induced glucose uptake. Induces GKAP42 protein degradation in adipocytes which is partially responsible for TNF-induced insulin resistance (By similarity). Plays a role in angiogenesis by inducing VEGF production synergistically with IL1B and IL6 (By similarity). Promotes osteoclastogenesis and therefore mediates bone resorption (By similarity).</text>
</comment>
<comment type="function">
    <text evidence="2">The TNF intracellular domain (ICD) form induces IL12 production in dendritic cells.</text>
</comment>
<comment type="subunit">
    <text evidence="1">Homotrimer. Interacts with SPPL2B (By similarity).</text>
</comment>
<comment type="subcellular location">
    <subcellularLocation>
        <location evidence="1">Cell membrane</location>
        <topology evidence="1">Single-pass type II membrane protein</topology>
    </subcellularLocation>
</comment>
<comment type="subcellular location">
    <molecule>Tumor necrosis factor, membrane form</molecule>
    <subcellularLocation>
        <location evidence="1">Membrane</location>
        <topology evidence="1">Single-pass type II membrane protein</topology>
    </subcellularLocation>
</comment>
<comment type="subcellular location">
    <molecule>Tumor necrosis factor, soluble form</molecule>
    <subcellularLocation>
        <location evidence="1">Secreted</location>
    </subcellularLocation>
</comment>
<comment type="subcellular location">
    <molecule>C-domain 1</molecule>
    <subcellularLocation>
        <location evidence="1">Secreted</location>
    </subcellularLocation>
</comment>
<comment type="subcellular location">
    <molecule>C-domain 2</molecule>
    <subcellularLocation>
        <location evidence="1">Secreted</location>
    </subcellularLocation>
</comment>
<comment type="PTM">
    <text evidence="1">The soluble form derives from the membrane form by proteolytic processing. The membrane-bound form is further proteolytically processed by SPPL2A or SPPL2B through regulated intramembrane proteolysis producing TNF intracellular domains (ICD1 and ICD2) released in the cytosol and TNF C-domain 1 and C-domain 2 secreted into the extracellular space (By similarity).</text>
</comment>
<comment type="PTM">
    <text evidence="1">The membrane form, but not the soluble form, is phosphorylated on serine residues. Dephosphorylation of the membrane form occurs by binding to soluble TNFRSF1A/TNFR1 (By similarity).</text>
</comment>
<comment type="PTM">
    <text evidence="1">O-glycosylated; glycans contain galactose, N-acetylgalactosamine and N-acetylneuraminic acid.</text>
</comment>
<comment type="PTM">
    <molecule>Tumor necrosis factor, soluble form</molecule>
    <text evidence="2">The soluble form is demyristoylated by SIRT6, promoting its secretion.</text>
</comment>
<comment type="similarity">
    <text evidence="6">Belongs to the tumor necrosis factor family.</text>
</comment>
<proteinExistence type="evidence at transcript level"/>
<feature type="chain" id="PRO_0000034449" description="Tumor necrosis factor, membrane form">
    <location>
        <begin position="1"/>
        <end position="235"/>
    </location>
</feature>
<feature type="chain" id="PRO_0000417283" description="Intracellular domain 1" evidence="1">
    <location>
        <begin position="1"/>
        <end position="39"/>
    </location>
</feature>
<feature type="chain" id="PRO_0000417284" description="Intracellular domain 2" evidence="1">
    <location>
        <begin position="1"/>
        <end position="35"/>
    </location>
</feature>
<feature type="chain" id="PRO_0000417285" description="C-domain 1" evidence="1">
    <location>
        <begin position="50"/>
        <end status="unknown"/>
    </location>
</feature>
<feature type="chain" id="PRO_0000417286" description="C-domain 2" evidence="1">
    <location>
        <begin position="52"/>
        <end status="unknown"/>
    </location>
</feature>
<feature type="chain" id="PRO_0000034450" description="Tumor necrosis factor, soluble form">
    <location>
        <begin position="80"/>
        <end position="235"/>
    </location>
</feature>
<feature type="topological domain" description="Cytoplasmic" evidence="4">
    <location>
        <begin position="1"/>
        <end position="35"/>
    </location>
</feature>
<feature type="transmembrane region" description="Helical; Signal-anchor for type II membrane protein" evidence="4">
    <location>
        <begin position="36"/>
        <end position="56"/>
    </location>
</feature>
<feature type="topological domain" description="Extracellular" evidence="4">
    <location>
        <begin position="57"/>
        <end position="235"/>
    </location>
</feature>
<feature type="domain" description="THD" evidence="5">
    <location>
        <begin position="91"/>
        <end position="235"/>
    </location>
</feature>
<feature type="site" description="Cleavage; by SPPL2A or SPPL2B" evidence="1">
    <location>
        <begin position="34"/>
        <end position="35"/>
    </location>
</feature>
<feature type="site" description="Cleavage; by SPPL2A or SPPL2B" evidence="1">
    <location>
        <begin position="39"/>
        <end position="40"/>
    </location>
</feature>
<feature type="site" description="Cleavage; by SPPL2A or SPPL2B" evidence="1">
    <location>
        <begin position="49"/>
        <end position="50"/>
    </location>
</feature>
<feature type="site" description="Cleavage; by SPPL2A or SPPL2B" evidence="1">
    <location>
        <begin position="51"/>
        <end position="52"/>
    </location>
</feature>
<feature type="site" description="Cleavage; by ADAM17" evidence="1">
    <location>
        <begin position="79"/>
        <end position="80"/>
    </location>
</feature>
<feature type="modified residue" description="Phosphoserine; by CK1" evidence="1">
    <location>
        <position position="2"/>
    </location>
</feature>
<feature type="lipid moiety-binding region" description="N6-myristoyl lysine" evidence="2">
    <location>
        <position position="19"/>
    </location>
</feature>
<feature type="lipid moiety-binding region" description="N6-myristoyl lysine" evidence="2">
    <location>
        <position position="20"/>
    </location>
</feature>
<feature type="disulfide bond" evidence="5">
    <location>
        <begin position="148"/>
        <end position="179"/>
    </location>
</feature>
<feature type="sequence conflict" description="In Ref. 3; AAA31486." evidence="6" ref="3">
    <location>
        <position position="63"/>
    </location>
</feature>
<name>TNFA_RABIT</name>
<protein>
    <recommendedName>
        <fullName>Tumor necrosis factor</fullName>
    </recommendedName>
    <alternativeName>
        <fullName>Cachectin</fullName>
    </alternativeName>
    <alternativeName>
        <fullName>TNF-alpha</fullName>
    </alternativeName>
    <alternativeName>
        <fullName>Tumor necrosis factor ligand superfamily member 2</fullName>
        <shortName>TNF-a</shortName>
    </alternativeName>
    <component>
        <recommendedName>
            <fullName>Tumor necrosis factor, membrane form</fullName>
        </recommendedName>
        <alternativeName>
            <fullName>N-terminal fragment</fullName>
            <shortName>NTF</shortName>
        </alternativeName>
    </component>
    <component>
        <recommendedName>
            <fullName>Intracellular domain 1</fullName>
            <shortName>ICD1</shortName>
        </recommendedName>
    </component>
    <component>
        <recommendedName>
            <fullName>Intracellular domain 2</fullName>
            <shortName>ICD2</shortName>
        </recommendedName>
    </component>
    <component>
        <recommendedName>
            <fullName>C-domain 1</fullName>
        </recommendedName>
    </component>
    <component>
        <recommendedName>
            <fullName>C-domain 2</fullName>
        </recommendedName>
    </component>
    <component>
        <recommendedName>
            <fullName>Tumor necrosis factor, soluble form</fullName>
        </recommendedName>
    </component>
</protein>
<organism>
    <name type="scientific">Oryctolagus cuniculus</name>
    <name type="common">Rabbit</name>
    <dbReference type="NCBI Taxonomy" id="9986"/>
    <lineage>
        <taxon>Eukaryota</taxon>
        <taxon>Metazoa</taxon>
        <taxon>Chordata</taxon>
        <taxon>Craniata</taxon>
        <taxon>Vertebrata</taxon>
        <taxon>Euteleostomi</taxon>
        <taxon>Mammalia</taxon>
        <taxon>Eutheria</taxon>
        <taxon>Euarchontoglires</taxon>
        <taxon>Glires</taxon>
        <taxon>Lagomorpha</taxon>
        <taxon>Leporidae</taxon>
        <taxon>Oryctolagus</taxon>
    </lineage>
</organism>
<sequence>MSTESMIRDVELAEGPLPKKAGGPQGSKRCLCLSLFSFLLVAGATTLFCLLHFRVIGPQEEEQSPNNLHLVNPVAQMVTLRSASRALSDKPLAHVVANPQVEGQLQWLSQRANALLANGMKLTDNQLVVPADGLYLIYSQVLFSGQGCRSYVLLTHTVSRFAVSYPNKVNLLSAIKSPCHRETPEEAEPMAWYEPIYLGGVFQLEKGDRLSTEVNQPEYLDLAESGQVYFGIIAL</sequence>
<dbReference type="EMBL" id="M12845">
    <property type="protein sequence ID" value="AAA31486.1"/>
    <property type="molecule type" value="mRNA"/>
</dbReference>
<dbReference type="EMBL" id="M12846">
    <property type="protein sequence ID" value="AAA31482.1"/>
    <property type="molecule type" value="Genomic_DNA"/>
</dbReference>
<dbReference type="EMBL" id="M60340">
    <property type="protein sequence ID" value="AAA31484.1"/>
    <property type="molecule type" value="Genomic_DNA"/>
</dbReference>
<dbReference type="PIR" id="A25454">
    <property type="entry name" value="A25451"/>
</dbReference>
<dbReference type="RefSeq" id="NP_001075732.1">
    <property type="nucleotide sequence ID" value="NM_001082263.1"/>
</dbReference>
<dbReference type="RefSeq" id="XP_008260759.1">
    <property type="nucleotide sequence ID" value="XM_008262537.4"/>
</dbReference>
<dbReference type="SMR" id="P04924"/>
<dbReference type="FunCoup" id="P04924">
    <property type="interactions" value="200"/>
</dbReference>
<dbReference type="STRING" id="9986.ENSOCUP00000005787"/>
<dbReference type="PaxDb" id="9986-ENSOCUP00000005787"/>
<dbReference type="GeneID" id="100009088"/>
<dbReference type="KEGG" id="ocu:100009088"/>
<dbReference type="CTD" id="7124"/>
<dbReference type="eggNOG" id="ENOG502S4K8">
    <property type="taxonomic scope" value="Eukaryota"/>
</dbReference>
<dbReference type="HOGENOM" id="CLU_070352_3_1_1"/>
<dbReference type="InParanoid" id="P04924"/>
<dbReference type="OMA" id="GATMLFC"/>
<dbReference type="OrthoDB" id="9940698at2759"/>
<dbReference type="TreeFam" id="TF332169"/>
<dbReference type="Proteomes" id="UP000001811">
    <property type="component" value="Unplaced"/>
</dbReference>
<dbReference type="GO" id="GO:0009986">
    <property type="term" value="C:cell surface"/>
    <property type="evidence" value="ECO:0007669"/>
    <property type="project" value="TreeGrafter"/>
</dbReference>
<dbReference type="GO" id="GO:0005615">
    <property type="term" value="C:extracellular space"/>
    <property type="evidence" value="ECO:0007669"/>
    <property type="project" value="UniProtKB-KW"/>
</dbReference>
<dbReference type="GO" id="GO:0005886">
    <property type="term" value="C:plasma membrane"/>
    <property type="evidence" value="ECO:0007669"/>
    <property type="project" value="UniProtKB-SubCell"/>
</dbReference>
<dbReference type="GO" id="GO:0005125">
    <property type="term" value="F:cytokine activity"/>
    <property type="evidence" value="ECO:0007669"/>
    <property type="project" value="UniProtKB-KW"/>
</dbReference>
<dbReference type="GO" id="GO:0005164">
    <property type="term" value="F:tumor necrosis factor receptor binding"/>
    <property type="evidence" value="ECO:0007669"/>
    <property type="project" value="InterPro"/>
</dbReference>
<dbReference type="GO" id="GO:0008625">
    <property type="term" value="P:extrinsic apoptotic signaling pathway via death domain receptors"/>
    <property type="evidence" value="ECO:0007669"/>
    <property type="project" value="TreeGrafter"/>
</dbReference>
<dbReference type="GO" id="GO:0006955">
    <property type="term" value="P:immune response"/>
    <property type="evidence" value="ECO:0007669"/>
    <property type="project" value="InterPro"/>
</dbReference>
<dbReference type="GO" id="GO:0097527">
    <property type="term" value="P:necroptotic signaling pathway"/>
    <property type="evidence" value="ECO:0000250"/>
    <property type="project" value="UniProtKB"/>
</dbReference>
<dbReference type="GO" id="GO:0043123">
    <property type="term" value="P:positive regulation of canonical NF-kappaB signal transduction"/>
    <property type="evidence" value="ECO:0007669"/>
    <property type="project" value="TreeGrafter"/>
</dbReference>
<dbReference type="GO" id="GO:2001238">
    <property type="term" value="P:positive regulation of extrinsic apoptotic signaling pathway"/>
    <property type="evidence" value="ECO:0007669"/>
    <property type="project" value="TreeGrafter"/>
</dbReference>
<dbReference type="GO" id="GO:0051092">
    <property type="term" value="P:positive regulation of NF-kappaB transcription factor activity"/>
    <property type="evidence" value="ECO:0000250"/>
    <property type="project" value="UniProtKB"/>
</dbReference>
<dbReference type="GO" id="GO:0045944">
    <property type="term" value="P:positive regulation of transcription by RNA polymerase II"/>
    <property type="evidence" value="ECO:0007669"/>
    <property type="project" value="TreeGrafter"/>
</dbReference>
<dbReference type="GO" id="GO:0065008">
    <property type="term" value="P:regulation of biological quality"/>
    <property type="evidence" value="ECO:0007669"/>
    <property type="project" value="UniProtKB-ARBA"/>
</dbReference>
<dbReference type="GO" id="GO:0050793">
    <property type="term" value="P:regulation of developmental process"/>
    <property type="evidence" value="ECO:0007669"/>
    <property type="project" value="UniProtKB-ARBA"/>
</dbReference>
<dbReference type="GO" id="GO:0051239">
    <property type="term" value="P:regulation of multicellular organismal process"/>
    <property type="evidence" value="ECO:0007669"/>
    <property type="project" value="UniProtKB-ARBA"/>
</dbReference>
<dbReference type="GO" id="GO:0051046">
    <property type="term" value="P:regulation of secretion"/>
    <property type="evidence" value="ECO:0007669"/>
    <property type="project" value="UniProtKB-ARBA"/>
</dbReference>
<dbReference type="GO" id="GO:0033209">
    <property type="term" value="P:tumor necrosis factor-mediated signaling pathway"/>
    <property type="evidence" value="ECO:0007669"/>
    <property type="project" value="TreeGrafter"/>
</dbReference>
<dbReference type="GO" id="GO:0010573">
    <property type="term" value="P:vascular endothelial growth factor production"/>
    <property type="evidence" value="ECO:0000250"/>
    <property type="project" value="UniProtKB"/>
</dbReference>
<dbReference type="CDD" id="cd00184">
    <property type="entry name" value="TNF"/>
    <property type="match status" value="1"/>
</dbReference>
<dbReference type="FunFam" id="2.60.120.40:FF:000007">
    <property type="entry name" value="Tumor necrosis factor"/>
    <property type="match status" value="1"/>
</dbReference>
<dbReference type="Gene3D" id="2.60.120.40">
    <property type="match status" value="1"/>
</dbReference>
<dbReference type="InterPro" id="IPR006053">
    <property type="entry name" value="TNF"/>
</dbReference>
<dbReference type="InterPro" id="IPR002959">
    <property type="entry name" value="TNF_alpha"/>
</dbReference>
<dbReference type="InterPro" id="IPR021184">
    <property type="entry name" value="TNF_CS"/>
</dbReference>
<dbReference type="InterPro" id="IPR006052">
    <property type="entry name" value="TNF_dom"/>
</dbReference>
<dbReference type="InterPro" id="IPR008983">
    <property type="entry name" value="Tumour_necrosis_fac-like_dom"/>
</dbReference>
<dbReference type="PANTHER" id="PTHR11471:SF23">
    <property type="entry name" value="TUMOR NECROSIS FACTOR"/>
    <property type="match status" value="1"/>
</dbReference>
<dbReference type="PANTHER" id="PTHR11471">
    <property type="entry name" value="TUMOR NECROSIS FACTOR FAMILY MEMBER"/>
    <property type="match status" value="1"/>
</dbReference>
<dbReference type="Pfam" id="PF00229">
    <property type="entry name" value="TNF"/>
    <property type="match status" value="1"/>
</dbReference>
<dbReference type="PRINTS" id="PR01234">
    <property type="entry name" value="TNECROSISFCT"/>
</dbReference>
<dbReference type="PRINTS" id="PR01235">
    <property type="entry name" value="TNFALPHA"/>
</dbReference>
<dbReference type="SMART" id="SM00207">
    <property type="entry name" value="TNF"/>
    <property type="match status" value="1"/>
</dbReference>
<dbReference type="SUPFAM" id="SSF49842">
    <property type="entry name" value="TNF-like"/>
    <property type="match status" value="1"/>
</dbReference>
<dbReference type="PROSITE" id="PS00251">
    <property type="entry name" value="THD_1"/>
    <property type="match status" value="1"/>
</dbReference>
<dbReference type="PROSITE" id="PS50049">
    <property type="entry name" value="THD_2"/>
    <property type="match status" value="1"/>
</dbReference>
<gene>
    <name type="primary">TNF</name>
    <name type="synonym">TNFA</name>
    <name type="synonym">TNFSF2</name>
</gene>
<keyword id="KW-1003">Cell membrane</keyword>
<keyword id="KW-0202">Cytokine</keyword>
<keyword id="KW-1015">Disulfide bond</keyword>
<keyword id="KW-0449">Lipoprotein</keyword>
<keyword id="KW-0472">Membrane</keyword>
<keyword id="KW-0519">Myristate</keyword>
<keyword id="KW-0597">Phosphoprotein</keyword>
<keyword id="KW-1185">Reference proteome</keyword>
<keyword id="KW-0964">Secreted</keyword>
<keyword id="KW-0735">Signal-anchor</keyword>
<keyword id="KW-0812">Transmembrane</keyword>
<keyword id="KW-1133">Transmembrane helix</keyword>
<evidence type="ECO:0000250" key="1"/>
<evidence type="ECO:0000250" key="2">
    <source>
        <dbReference type="UniProtKB" id="P01375"/>
    </source>
</evidence>
<evidence type="ECO:0000250" key="3">
    <source>
        <dbReference type="UniProtKB" id="P06804"/>
    </source>
</evidence>
<evidence type="ECO:0000255" key="4"/>
<evidence type="ECO:0000255" key="5">
    <source>
        <dbReference type="PROSITE-ProRule" id="PRU01387"/>
    </source>
</evidence>
<evidence type="ECO:0000305" key="6"/>